<gene>
    <name evidence="1" type="primary">rpmC</name>
    <name type="ordered locus">RrIowa_1189</name>
</gene>
<accession>B0BUQ2</accession>
<reference key="1">
    <citation type="journal article" date="2008" name="Infect. Immun.">
        <title>Genomic comparison of virulent Rickettsia rickettsii Sheila Smith and avirulent Rickettsia rickettsii Iowa.</title>
        <authorList>
            <person name="Ellison D.W."/>
            <person name="Clark T.R."/>
            <person name="Sturdevant D.E."/>
            <person name="Virtaneva K."/>
            <person name="Porcella S.F."/>
            <person name="Hackstadt T."/>
        </authorList>
    </citation>
    <scope>NUCLEOTIDE SEQUENCE [LARGE SCALE GENOMIC DNA]</scope>
    <source>
        <strain>Iowa</strain>
    </source>
</reference>
<keyword id="KW-0687">Ribonucleoprotein</keyword>
<keyword id="KW-0689">Ribosomal protein</keyword>
<proteinExistence type="inferred from homology"/>
<dbReference type="EMBL" id="CP000766">
    <property type="protein sequence ID" value="ABY72962.1"/>
    <property type="molecule type" value="Genomic_DNA"/>
</dbReference>
<dbReference type="RefSeq" id="WP_004997809.1">
    <property type="nucleotide sequence ID" value="NC_010263.3"/>
</dbReference>
<dbReference type="SMR" id="B0BUQ2"/>
<dbReference type="GeneID" id="95361478"/>
<dbReference type="KEGG" id="rrj:RrIowa_1189"/>
<dbReference type="eggNOG" id="COG0255">
    <property type="taxonomic scope" value="Bacteria"/>
</dbReference>
<dbReference type="HOGENOM" id="CLU_158491_1_0_5"/>
<dbReference type="Proteomes" id="UP000000796">
    <property type="component" value="Chromosome"/>
</dbReference>
<dbReference type="GO" id="GO:0022625">
    <property type="term" value="C:cytosolic large ribosomal subunit"/>
    <property type="evidence" value="ECO:0007669"/>
    <property type="project" value="TreeGrafter"/>
</dbReference>
<dbReference type="GO" id="GO:0003735">
    <property type="term" value="F:structural constituent of ribosome"/>
    <property type="evidence" value="ECO:0007669"/>
    <property type="project" value="InterPro"/>
</dbReference>
<dbReference type="GO" id="GO:0006412">
    <property type="term" value="P:translation"/>
    <property type="evidence" value="ECO:0007669"/>
    <property type="project" value="UniProtKB-UniRule"/>
</dbReference>
<dbReference type="CDD" id="cd00427">
    <property type="entry name" value="Ribosomal_L29_HIP"/>
    <property type="match status" value="1"/>
</dbReference>
<dbReference type="FunFam" id="1.10.287.310:FF:000001">
    <property type="entry name" value="50S ribosomal protein L29"/>
    <property type="match status" value="1"/>
</dbReference>
<dbReference type="Gene3D" id="1.10.287.310">
    <property type="match status" value="1"/>
</dbReference>
<dbReference type="HAMAP" id="MF_00374">
    <property type="entry name" value="Ribosomal_uL29"/>
    <property type="match status" value="1"/>
</dbReference>
<dbReference type="InterPro" id="IPR050063">
    <property type="entry name" value="Ribosomal_protein_uL29"/>
</dbReference>
<dbReference type="InterPro" id="IPR001854">
    <property type="entry name" value="Ribosomal_uL29"/>
</dbReference>
<dbReference type="InterPro" id="IPR018254">
    <property type="entry name" value="Ribosomal_uL29_CS"/>
</dbReference>
<dbReference type="InterPro" id="IPR036049">
    <property type="entry name" value="Ribosomal_uL29_sf"/>
</dbReference>
<dbReference type="NCBIfam" id="TIGR00012">
    <property type="entry name" value="L29"/>
    <property type="match status" value="1"/>
</dbReference>
<dbReference type="PANTHER" id="PTHR10916">
    <property type="entry name" value="60S RIBOSOMAL PROTEIN L35/50S RIBOSOMAL PROTEIN L29"/>
    <property type="match status" value="1"/>
</dbReference>
<dbReference type="PANTHER" id="PTHR10916:SF0">
    <property type="entry name" value="LARGE RIBOSOMAL SUBUNIT PROTEIN UL29C"/>
    <property type="match status" value="1"/>
</dbReference>
<dbReference type="Pfam" id="PF00831">
    <property type="entry name" value="Ribosomal_L29"/>
    <property type="match status" value="1"/>
</dbReference>
<dbReference type="SUPFAM" id="SSF46561">
    <property type="entry name" value="Ribosomal protein L29 (L29p)"/>
    <property type="match status" value="1"/>
</dbReference>
<dbReference type="PROSITE" id="PS00579">
    <property type="entry name" value="RIBOSOMAL_L29"/>
    <property type="match status" value="1"/>
</dbReference>
<protein>
    <recommendedName>
        <fullName evidence="1">Large ribosomal subunit protein uL29</fullName>
    </recommendedName>
    <alternativeName>
        <fullName evidence="2">50S ribosomal protein L29</fullName>
    </alternativeName>
</protein>
<name>RL29_RICRO</name>
<comment type="similarity">
    <text evidence="1">Belongs to the universal ribosomal protein uL29 family.</text>
</comment>
<evidence type="ECO:0000255" key="1">
    <source>
        <dbReference type="HAMAP-Rule" id="MF_00374"/>
    </source>
</evidence>
<evidence type="ECO:0000305" key="2"/>
<organism>
    <name type="scientific">Rickettsia rickettsii (strain Iowa)</name>
    <dbReference type="NCBI Taxonomy" id="452659"/>
    <lineage>
        <taxon>Bacteria</taxon>
        <taxon>Pseudomonadati</taxon>
        <taxon>Pseudomonadota</taxon>
        <taxon>Alphaproteobacteria</taxon>
        <taxon>Rickettsiales</taxon>
        <taxon>Rickettsiaceae</taxon>
        <taxon>Rickettsieae</taxon>
        <taxon>Rickettsia</taxon>
        <taxon>spotted fever group</taxon>
    </lineage>
</organism>
<sequence length="71" mass="8376">MNDLKLLRSKLSTETIEELYKNLNLLKKELFNLRFQQALGDLKNTSRFSLVKKSIARIKTELTKRANSEEY</sequence>
<feature type="chain" id="PRO_1000079898" description="Large ribosomal subunit protein uL29">
    <location>
        <begin position="1"/>
        <end position="71"/>
    </location>
</feature>